<keyword id="KW-0963">Cytoplasm</keyword>
<keyword id="KW-0227">DNA damage</keyword>
<keyword id="KW-0233">DNA recombination</keyword>
<keyword id="KW-0234">DNA repair</keyword>
<keyword id="KW-0238">DNA-binding</keyword>
<keyword id="KW-0255">Endonuclease</keyword>
<keyword id="KW-0378">Hydrolase</keyword>
<keyword id="KW-0460">Magnesium</keyword>
<keyword id="KW-0479">Metal-binding</keyword>
<keyword id="KW-0540">Nuclease</keyword>
<organism>
    <name type="scientific">Nitrosomonas eutropha (strain DSM 101675 / C91 / Nm57)</name>
    <dbReference type="NCBI Taxonomy" id="335283"/>
    <lineage>
        <taxon>Bacteria</taxon>
        <taxon>Pseudomonadati</taxon>
        <taxon>Pseudomonadota</taxon>
        <taxon>Betaproteobacteria</taxon>
        <taxon>Nitrosomonadales</taxon>
        <taxon>Nitrosomonadaceae</taxon>
        <taxon>Nitrosomonas</taxon>
    </lineage>
</organism>
<evidence type="ECO:0000255" key="1">
    <source>
        <dbReference type="HAMAP-Rule" id="MF_00034"/>
    </source>
</evidence>
<accession>Q0AJA5</accession>
<name>RUVC_NITEC</name>
<protein>
    <recommendedName>
        <fullName evidence="1">Crossover junction endodeoxyribonuclease RuvC</fullName>
        <ecNumber evidence="1">3.1.21.10</ecNumber>
    </recommendedName>
    <alternativeName>
        <fullName evidence="1">Holliday junction nuclease RuvC</fullName>
    </alternativeName>
    <alternativeName>
        <fullName evidence="1">Holliday junction resolvase RuvC</fullName>
    </alternativeName>
</protein>
<gene>
    <name evidence="1" type="primary">ruvC</name>
    <name type="ordered locus">Neut_0282</name>
</gene>
<proteinExistence type="inferred from homology"/>
<comment type="function">
    <text evidence="1">The RuvA-RuvB-RuvC complex processes Holliday junction (HJ) DNA during genetic recombination and DNA repair. Endonuclease that resolves HJ intermediates. Cleaves cruciform DNA by making single-stranded nicks across the HJ at symmetrical positions within the homologous arms, yielding a 5'-phosphate and a 3'-hydroxyl group; requires a central core of homology in the junction. The consensus cleavage sequence is 5'-(A/T)TT(C/G)-3'. Cleavage occurs on the 3'-side of the TT dinucleotide at the point of strand exchange. HJ branch migration catalyzed by RuvA-RuvB allows RuvC to scan DNA until it finds its consensus sequence, where it cleaves and resolves the cruciform DNA.</text>
</comment>
<comment type="catalytic activity">
    <reaction evidence="1">
        <text>Endonucleolytic cleavage at a junction such as a reciprocal single-stranded crossover between two homologous DNA duplexes (Holliday junction).</text>
        <dbReference type="EC" id="3.1.21.10"/>
    </reaction>
</comment>
<comment type="cofactor">
    <cofactor evidence="1">
        <name>Mg(2+)</name>
        <dbReference type="ChEBI" id="CHEBI:18420"/>
    </cofactor>
    <text evidence="1">Binds 2 Mg(2+) ion per subunit.</text>
</comment>
<comment type="subunit">
    <text evidence="1">Homodimer which binds Holliday junction (HJ) DNA. The HJ becomes 2-fold symmetrical on binding to RuvC with unstacked arms; it has a different conformation from HJ DNA in complex with RuvA. In the full resolvosome a probable DNA-RuvA(4)-RuvB(12)-RuvC(2) complex forms which resolves the HJ.</text>
</comment>
<comment type="subcellular location">
    <subcellularLocation>
        <location evidence="1">Cytoplasm</location>
    </subcellularLocation>
</comment>
<comment type="similarity">
    <text evidence="1">Belongs to the RuvC family.</text>
</comment>
<sequence length="178" mass="19031">MLPSGKSIRILGIDPGLRITGFGVIEKNGSQLTYLGSGCVVTEKSGLPDRLKTILDGLNEIILQHQPEQVAVEQVFVNINPKSTLLLGQARGAAISAAVLHELSVYEYTALQIKQSVVGNGHARKEQVQEMVMRLLRLGERPRPDAADALACAICHAHGGTGLLALSVRNHLKRGGCP</sequence>
<reference key="1">
    <citation type="journal article" date="2007" name="Environ. Microbiol.">
        <title>Whole-genome analysis of the ammonia-oxidizing bacterium, Nitrosomonas eutropha C91: implications for niche adaptation.</title>
        <authorList>
            <person name="Stein L.Y."/>
            <person name="Arp D.J."/>
            <person name="Berube P.M."/>
            <person name="Chain P.S."/>
            <person name="Hauser L."/>
            <person name="Jetten M.S."/>
            <person name="Klotz M.G."/>
            <person name="Larimer F.W."/>
            <person name="Norton J.M."/>
            <person name="Op den Camp H.J.M."/>
            <person name="Shin M."/>
            <person name="Wei X."/>
        </authorList>
    </citation>
    <scope>NUCLEOTIDE SEQUENCE [LARGE SCALE GENOMIC DNA]</scope>
    <source>
        <strain>DSM 101675 / C91 / Nm57</strain>
    </source>
</reference>
<feature type="chain" id="PRO_0000332434" description="Crossover junction endodeoxyribonuclease RuvC">
    <location>
        <begin position="1"/>
        <end position="178"/>
    </location>
</feature>
<feature type="active site" evidence="1">
    <location>
        <position position="14"/>
    </location>
</feature>
<feature type="active site" evidence="1">
    <location>
        <position position="73"/>
    </location>
</feature>
<feature type="active site" evidence="1">
    <location>
        <position position="145"/>
    </location>
</feature>
<feature type="binding site" evidence="1">
    <location>
        <position position="14"/>
    </location>
    <ligand>
        <name>Mg(2+)</name>
        <dbReference type="ChEBI" id="CHEBI:18420"/>
        <label>1</label>
    </ligand>
</feature>
<feature type="binding site" evidence="1">
    <location>
        <position position="73"/>
    </location>
    <ligand>
        <name>Mg(2+)</name>
        <dbReference type="ChEBI" id="CHEBI:18420"/>
        <label>2</label>
    </ligand>
</feature>
<feature type="binding site" evidence="1">
    <location>
        <position position="145"/>
    </location>
    <ligand>
        <name>Mg(2+)</name>
        <dbReference type="ChEBI" id="CHEBI:18420"/>
        <label>1</label>
    </ligand>
</feature>
<dbReference type="EC" id="3.1.21.10" evidence="1"/>
<dbReference type="EMBL" id="CP000450">
    <property type="protein sequence ID" value="ABI58566.1"/>
    <property type="molecule type" value="Genomic_DNA"/>
</dbReference>
<dbReference type="RefSeq" id="WP_011633410.1">
    <property type="nucleotide sequence ID" value="NC_008344.1"/>
</dbReference>
<dbReference type="SMR" id="Q0AJA5"/>
<dbReference type="STRING" id="335283.Neut_0282"/>
<dbReference type="KEGG" id="net:Neut_0282"/>
<dbReference type="eggNOG" id="COG0817">
    <property type="taxonomic scope" value="Bacteria"/>
</dbReference>
<dbReference type="HOGENOM" id="CLU_091257_2_1_4"/>
<dbReference type="OrthoDB" id="9805499at2"/>
<dbReference type="Proteomes" id="UP000001966">
    <property type="component" value="Chromosome"/>
</dbReference>
<dbReference type="GO" id="GO:0005737">
    <property type="term" value="C:cytoplasm"/>
    <property type="evidence" value="ECO:0007669"/>
    <property type="project" value="UniProtKB-SubCell"/>
</dbReference>
<dbReference type="GO" id="GO:0048476">
    <property type="term" value="C:Holliday junction resolvase complex"/>
    <property type="evidence" value="ECO:0007669"/>
    <property type="project" value="UniProtKB-UniRule"/>
</dbReference>
<dbReference type="GO" id="GO:0008821">
    <property type="term" value="F:crossover junction DNA endonuclease activity"/>
    <property type="evidence" value="ECO:0007669"/>
    <property type="project" value="UniProtKB-UniRule"/>
</dbReference>
<dbReference type="GO" id="GO:0003677">
    <property type="term" value="F:DNA binding"/>
    <property type="evidence" value="ECO:0007669"/>
    <property type="project" value="UniProtKB-KW"/>
</dbReference>
<dbReference type="GO" id="GO:0000287">
    <property type="term" value="F:magnesium ion binding"/>
    <property type="evidence" value="ECO:0007669"/>
    <property type="project" value="UniProtKB-UniRule"/>
</dbReference>
<dbReference type="GO" id="GO:0006310">
    <property type="term" value="P:DNA recombination"/>
    <property type="evidence" value="ECO:0007669"/>
    <property type="project" value="UniProtKB-UniRule"/>
</dbReference>
<dbReference type="GO" id="GO:0006281">
    <property type="term" value="P:DNA repair"/>
    <property type="evidence" value="ECO:0007669"/>
    <property type="project" value="UniProtKB-UniRule"/>
</dbReference>
<dbReference type="CDD" id="cd16962">
    <property type="entry name" value="RuvC"/>
    <property type="match status" value="1"/>
</dbReference>
<dbReference type="FunFam" id="3.30.420.10:FF:000002">
    <property type="entry name" value="Crossover junction endodeoxyribonuclease RuvC"/>
    <property type="match status" value="1"/>
</dbReference>
<dbReference type="Gene3D" id="3.30.420.10">
    <property type="entry name" value="Ribonuclease H-like superfamily/Ribonuclease H"/>
    <property type="match status" value="1"/>
</dbReference>
<dbReference type="HAMAP" id="MF_00034">
    <property type="entry name" value="RuvC"/>
    <property type="match status" value="1"/>
</dbReference>
<dbReference type="InterPro" id="IPR012337">
    <property type="entry name" value="RNaseH-like_sf"/>
</dbReference>
<dbReference type="InterPro" id="IPR036397">
    <property type="entry name" value="RNaseH_sf"/>
</dbReference>
<dbReference type="InterPro" id="IPR020563">
    <property type="entry name" value="X-over_junc_endoDNase_Mg_BS"/>
</dbReference>
<dbReference type="InterPro" id="IPR002176">
    <property type="entry name" value="X-over_junc_endoDNase_RuvC"/>
</dbReference>
<dbReference type="NCBIfam" id="TIGR00228">
    <property type="entry name" value="ruvC"/>
    <property type="match status" value="1"/>
</dbReference>
<dbReference type="PANTHER" id="PTHR30194">
    <property type="entry name" value="CROSSOVER JUNCTION ENDODEOXYRIBONUCLEASE RUVC"/>
    <property type="match status" value="1"/>
</dbReference>
<dbReference type="PANTHER" id="PTHR30194:SF3">
    <property type="entry name" value="CROSSOVER JUNCTION ENDODEOXYRIBONUCLEASE RUVC"/>
    <property type="match status" value="1"/>
</dbReference>
<dbReference type="Pfam" id="PF02075">
    <property type="entry name" value="RuvC"/>
    <property type="match status" value="1"/>
</dbReference>
<dbReference type="PRINTS" id="PR00696">
    <property type="entry name" value="RSOLVASERUVC"/>
</dbReference>
<dbReference type="SUPFAM" id="SSF53098">
    <property type="entry name" value="Ribonuclease H-like"/>
    <property type="match status" value="1"/>
</dbReference>
<dbReference type="PROSITE" id="PS01321">
    <property type="entry name" value="RUVC"/>
    <property type="match status" value="1"/>
</dbReference>